<feature type="chain" id="PRO_0000240339" description="Arginase-1">
    <location>
        <begin position="1"/>
        <end position="322"/>
    </location>
</feature>
<feature type="region of interest" description="Disordered" evidence="7">
    <location>
        <begin position="1"/>
        <end position="27"/>
    </location>
</feature>
<feature type="binding site" evidence="6">
    <location>
        <position position="101"/>
    </location>
    <ligand>
        <name>Mn(2+)</name>
        <dbReference type="ChEBI" id="CHEBI:29035"/>
        <label>1</label>
    </ligand>
</feature>
<feature type="binding site" evidence="6">
    <location>
        <position position="124"/>
    </location>
    <ligand>
        <name>Mn(2+)</name>
        <dbReference type="ChEBI" id="CHEBI:29035"/>
        <label>1</label>
    </ligand>
</feature>
<feature type="binding site" evidence="6">
    <location>
        <position position="124"/>
    </location>
    <ligand>
        <name>Mn(2+)</name>
        <dbReference type="ChEBI" id="CHEBI:29035"/>
        <label>2</label>
    </ligand>
</feature>
<feature type="binding site" evidence="2">
    <location>
        <begin position="126"/>
        <end position="130"/>
    </location>
    <ligand>
        <name>substrate</name>
    </ligand>
</feature>
<feature type="binding site" evidence="6">
    <location>
        <position position="126"/>
    </location>
    <ligand>
        <name>Mn(2+)</name>
        <dbReference type="ChEBI" id="CHEBI:29035"/>
        <label>2</label>
    </ligand>
</feature>
<feature type="binding site" evidence="6">
    <location>
        <position position="128"/>
    </location>
    <ligand>
        <name>Mn(2+)</name>
        <dbReference type="ChEBI" id="CHEBI:29035"/>
        <label>1</label>
    </ligand>
</feature>
<feature type="binding site" evidence="2">
    <location>
        <begin position="137"/>
        <end position="139"/>
    </location>
    <ligand>
        <name>substrate</name>
    </ligand>
</feature>
<feature type="binding site" evidence="2">
    <location>
        <position position="183"/>
    </location>
    <ligand>
        <name>substrate</name>
    </ligand>
</feature>
<feature type="binding site" evidence="6">
    <location>
        <position position="232"/>
    </location>
    <ligand>
        <name>Mn(2+)</name>
        <dbReference type="ChEBI" id="CHEBI:29035"/>
        <label>1</label>
    </ligand>
</feature>
<feature type="binding site" evidence="6">
    <location>
        <position position="232"/>
    </location>
    <ligand>
        <name>Mn(2+)</name>
        <dbReference type="ChEBI" id="CHEBI:29035"/>
        <label>2</label>
    </ligand>
</feature>
<feature type="binding site" evidence="6">
    <location>
        <position position="234"/>
    </location>
    <ligand>
        <name>Mn(2+)</name>
        <dbReference type="ChEBI" id="CHEBI:29035"/>
        <label>2</label>
    </ligand>
</feature>
<feature type="binding site" evidence="3">
    <location>
        <position position="246"/>
    </location>
    <ligand>
        <name>substrate</name>
    </ligand>
</feature>
<feature type="binding site" evidence="4">
    <location>
        <position position="277"/>
    </location>
    <ligand>
        <name>substrate</name>
    </ligand>
</feature>
<feature type="modified residue" description="Phosphoserine" evidence="5">
    <location>
        <position position="7"/>
    </location>
</feature>
<feature type="modified residue" description="N6-succinyllysine" evidence="5">
    <location>
        <position position="17"/>
    </location>
</feature>
<feature type="modified residue" description="Phosphoserine" evidence="2">
    <location>
        <position position="62"/>
    </location>
</feature>
<feature type="modified residue" description="N6-succinyllysine" evidence="5">
    <location>
        <position position="75"/>
    </location>
</feature>
<feature type="modified residue" description="Phosphoserine" evidence="2">
    <location>
        <position position="217"/>
    </location>
</feature>
<name>ARGI1_BOVIN</name>
<evidence type="ECO:0000250" key="1"/>
<evidence type="ECO:0000250" key="2">
    <source>
        <dbReference type="UniProtKB" id="P05089"/>
    </source>
</evidence>
<evidence type="ECO:0000250" key="3">
    <source>
        <dbReference type="UniProtKB" id="P53608"/>
    </source>
</evidence>
<evidence type="ECO:0000250" key="4">
    <source>
        <dbReference type="UniProtKB" id="P78540"/>
    </source>
</evidence>
<evidence type="ECO:0000250" key="5">
    <source>
        <dbReference type="UniProtKB" id="Q61176"/>
    </source>
</evidence>
<evidence type="ECO:0000255" key="6">
    <source>
        <dbReference type="PROSITE-ProRule" id="PRU00742"/>
    </source>
</evidence>
<evidence type="ECO:0000256" key="7">
    <source>
        <dbReference type="SAM" id="MobiDB-lite"/>
    </source>
</evidence>
<comment type="catalytic activity">
    <reaction evidence="2">
        <text>L-arginine + H2O = urea + L-ornithine</text>
        <dbReference type="Rhea" id="RHEA:20569"/>
        <dbReference type="ChEBI" id="CHEBI:15377"/>
        <dbReference type="ChEBI" id="CHEBI:16199"/>
        <dbReference type="ChEBI" id="CHEBI:32682"/>
        <dbReference type="ChEBI" id="CHEBI:46911"/>
        <dbReference type="EC" id="3.5.3.1"/>
    </reaction>
</comment>
<comment type="cofactor">
    <cofactor evidence="6">
        <name>Mn(2+)</name>
        <dbReference type="ChEBI" id="CHEBI:29035"/>
    </cofactor>
    <text evidence="6">Binds 2 manganese ions per subunit.</text>
</comment>
<comment type="pathway">
    <text evidence="2">Nitrogen metabolism; urea cycle; L-ornithine and urea from L-arginine: step 1/1.</text>
</comment>
<comment type="subunit">
    <text evidence="1 2">Homotrimer (By similarity). Interacts with CMTM6 (By similarity).</text>
</comment>
<comment type="subcellular location">
    <subcellularLocation>
        <location evidence="1">Cytoplasm</location>
    </subcellularLocation>
</comment>
<comment type="similarity">
    <text evidence="6">Belongs to the arginase family.</text>
</comment>
<proteinExistence type="evidence at transcript level"/>
<accession>Q2KJ64</accession>
<protein>
    <recommendedName>
        <fullName>Arginase-1</fullName>
        <ecNumber evidence="2">3.5.3.1</ecNumber>
    </recommendedName>
    <alternativeName>
        <fullName>Liver-type arginase</fullName>
    </alternativeName>
    <alternativeName>
        <fullName>Type I arginase</fullName>
    </alternativeName>
</protein>
<gene>
    <name type="primary">ARG1</name>
</gene>
<reference key="1">
    <citation type="submission" date="2005-09" db="EMBL/GenBank/DDBJ databases">
        <authorList>
            <consortium name="NIH - Mammalian Gene Collection (MGC) project"/>
        </authorList>
    </citation>
    <scope>NUCLEOTIDE SEQUENCE [LARGE SCALE MRNA]</scope>
    <source>
        <strain>Hereford</strain>
        <tissue>Fetal liver</tissue>
    </source>
</reference>
<keyword id="KW-0056">Arginine metabolism</keyword>
<keyword id="KW-0963">Cytoplasm</keyword>
<keyword id="KW-0378">Hydrolase</keyword>
<keyword id="KW-0464">Manganese</keyword>
<keyword id="KW-0479">Metal-binding</keyword>
<keyword id="KW-0597">Phosphoprotein</keyword>
<keyword id="KW-1185">Reference proteome</keyword>
<keyword id="KW-0835">Urea cycle</keyword>
<dbReference type="EC" id="3.5.3.1" evidence="2"/>
<dbReference type="EMBL" id="BC105497">
    <property type="protein sequence ID" value="AAI05498.1"/>
    <property type="molecule type" value="mRNA"/>
</dbReference>
<dbReference type="RefSeq" id="NP_001039619.1">
    <property type="nucleotide sequence ID" value="NM_001046154.1"/>
</dbReference>
<dbReference type="RefSeq" id="XP_005210981.1">
    <property type="nucleotide sequence ID" value="XM_005210924.3"/>
</dbReference>
<dbReference type="RefSeq" id="XP_010806852.1">
    <property type="nucleotide sequence ID" value="XM_010808550.2"/>
</dbReference>
<dbReference type="SMR" id="Q2KJ64"/>
<dbReference type="FunCoup" id="Q2KJ64">
    <property type="interactions" value="188"/>
</dbReference>
<dbReference type="STRING" id="9913.ENSBTAP00000016461"/>
<dbReference type="BindingDB" id="Q2KJ64"/>
<dbReference type="ChEMBL" id="CHEMBL1075060"/>
<dbReference type="PaxDb" id="9913-ENSBTAP00000016461"/>
<dbReference type="PeptideAtlas" id="Q2KJ64"/>
<dbReference type="Ensembl" id="ENSBTAT00000016461.6">
    <property type="protein sequence ID" value="ENSBTAP00000016461.5"/>
    <property type="gene ID" value="ENSBTAG00000012403.6"/>
</dbReference>
<dbReference type="GeneID" id="513608"/>
<dbReference type="KEGG" id="bta:513608"/>
<dbReference type="CTD" id="383"/>
<dbReference type="VEuPathDB" id="HostDB:ENSBTAG00000012403"/>
<dbReference type="VGNC" id="VGNC:26070">
    <property type="gene designation" value="ARG1"/>
</dbReference>
<dbReference type="eggNOG" id="KOG2965">
    <property type="taxonomic scope" value="Eukaryota"/>
</dbReference>
<dbReference type="GeneTree" id="ENSGT00950000183195"/>
<dbReference type="HOGENOM" id="CLU_039478_6_1_1"/>
<dbReference type="InParanoid" id="Q2KJ64"/>
<dbReference type="OMA" id="FSWMTPC"/>
<dbReference type="OrthoDB" id="9992747at2759"/>
<dbReference type="TreeFam" id="TF300034"/>
<dbReference type="Reactome" id="R-BTA-6798695">
    <property type="pathway name" value="Neutrophil degranulation"/>
</dbReference>
<dbReference type="Reactome" id="R-BTA-70635">
    <property type="pathway name" value="Urea cycle"/>
</dbReference>
<dbReference type="SABIO-RK" id="Q2KJ64"/>
<dbReference type="UniPathway" id="UPA00158">
    <property type="reaction ID" value="UER00270"/>
</dbReference>
<dbReference type="PRO" id="PR:Q2KJ64"/>
<dbReference type="Proteomes" id="UP000009136">
    <property type="component" value="Chromosome 9"/>
</dbReference>
<dbReference type="Bgee" id="ENSBTAG00000012403">
    <property type="expression patterns" value="Expressed in liver and 30 other cell types or tissues"/>
</dbReference>
<dbReference type="GO" id="GO:0005737">
    <property type="term" value="C:cytoplasm"/>
    <property type="evidence" value="ECO:0000318"/>
    <property type="project" value="GO_Central"/>
</dbReference>
<dbReference type="GO" id="GO:0005829">
    <property type="term" value="C:cytosol"/>
    <property type="evidence" value="ECO:0000318"/>
    <property type="project" value="GO_Central"/>
</dbReference>
<dbReference type="GO" id="GO:0004053">
    <property type="term" value="F:arginase activity"/>
    <property type="evidence" value="ECO:0000318"/>
    <property type="project" value="GO_Central"/>
</dbReference>
<dbReference type="GO" id="GO:0030145">
    <property type="term" value="F:manganese ion binding"/>
    <property type="evidence" value="ECO:0000318"/>
    <property type="project" value="GO_Central"/>
</dbReference>
<dbReference type="GO" id="GO:0019547">
    <property type="term" value="P:arginine catabolic process to ornithine"/>
    <property type="evidence" value="ECO:0000318"/>
    <property type="project" value="GO_Central"/>
</dbReference>
<dbReference type="GO" id="GO:0000050">
    <property type="term" value="P:urea cycle"/>
    <property type="evidence" value="ECO:0007669"/>
    <property type="project" value="UniProtKB-UniPathway"/>
</dbReference>
<dbReference type="CDD" id="cd11587">
    <property type="entry name" value="Arginase-like"/>
    <property type="match status" value="1"/>
</dbReference>
<dbReference type="FunFam" id="3.40.800.10:FF:000011">
    <property type="entry name" value="Arginase-1"/>
    <property type="match status" value="1"/>
</dbReference>
<dbReference type="Gene3D" id="3.40.800.10">
    <property type="entry name" value="Ureohydrolase domain"/>
    <property type="match status" value="1"/>
</dbReference>
<dbReference type="InterPro" id="IPR014033">
    <property type="entry name" value="Arginase"/>
</dbReference>
<dbReference type="InterPro" id="IPR006035">
    <property type="entry name" value="Ureohydrolase"/>
</dbReference>
<dbReference type="InterPro" id="IPR023696">
    <property type="entry name" value="Ureohydrolase_dom_sf"/>
</dbReference>
<dbReference type="InterPro" id="IPR020855">
    <property type="entry name" value="Ureohydrolase_Mn_BS"/>
</dbReference>
<dbReference type="NCBIfam" id="TIGR01229">
    <property type="entry name" value="rocF_arginase"/>
    <property type="match status" value="1"/>
</dbReference>
<dbReference type="PANTHER" id="PTHR43782">
    <property type="entry name" value="ARGINASE"/>
    <property type="match status" value="1"/>
</dbReference>
<dbReference type="PANTHER" id="PTHR43782:SF2">
    <property type="entry name" value="ARGINASE-1"/>
    <property type="match status" value="1"/>
</dbReference>
<dbReference type="Pfam" id="PF00491">
    <property type="entry name" value="Arginase"/>
    <property type="match status" value="1"/>
</dbReference>
<dbReference type="PIRSF" id="PIRSF036979">
    <property type="entry name" value="Arginase"/>
    <property type="match status" value="1"/>
</dbReference>
<dbReference type="PRINTS" id="PR00116">
    <property type="entry name" value="ARGINASE"/>
</dbReference>
<dbReference type="SUPFAM" id="SSF52768">
    <property type="entry name" value="Arginase/deacetylase"/>
    <property type="match status" value="1"/>
</dbReference>
<dbReference type="PROSITE" id="PS01053">
    <property type="entry name" value="ARGINASE_1"/>
    <property type="match status" value="1"/>
</dbReference>
<dbReference type="PROSITE" id="PS51409">
    <property type="entry name" value="ARGINASE_2"/>
    <property type="match status" value="1"/>
</dbReference>
<sequence length="322" mass="35009">MSSKPQSIGVIGAPFSKGQPRGGVEEGPTVLRKAGLLEKLKELECDVKDYGDLSFADNLDDSPFQIVKNPRCVGKASEKLADVVAEVKKTGRISLVLGGDHSLAIGSISGHARVHPDLCVIWVDAHTDINTPLTTKTGNLHGQPVSFLLKELKEKMPEVPGFYWVAPCISAKDIVYIGLRDVDPGEHYILKTLGIKYFSMTEVDKLGIGKVMEETFSYLLGRKKRPIHLSFDVDGLDPSFTPATGTPVQGGLTYREGLYITEEIYKTGLLSGLDIMEVNPSLGKTPEEVTRTVNTTVAITMACFGVAREGNHKPIDYLSPPK</sequence>
<organism>
    <name type="scientific">Bos taurus</name>
    <name type="common">Bovine</name>
    <dbReference type="NCBI Taxonomy" id="9913"/>
    <lineage>
        <taxon>Eukaryota</taxon>
        <taxon>Metazoa</taxon>
        <taxon>Chordata</taxon>
        <taxon>Craniata</taxon>
        <taxon>Vertebrata</taxon>
        <taxon>Euteleostomi</taxon>
        <taxon>Mammalia</taxon>
        <taxon>Eutheria</taxon>
        <taxon>Laurasiatheria</taxon>
        <taxon>Artiodactyla</taxon>
        <taxon>Ruminantia</taxon>
        <taxon>Pecora</taxon>
        <taxon>Bovidae</taxon>
        <taxon>Bovinae</taxon>
        <taxon>Bos</taxon>
    </lineage>
</organism>